<feature type="chain" id="PRO_0000196722" description="Putative pyruvate, phosphate dikinase regulatory protein 2">
    <location>
        <begin position="1"/>
        <end position="272"/>
    </location>
</feature>
<feature type="binding site" evidence="1">
    <location>
        <begin position="154"/>
        <end position="161"/>
    </location>
    <ligand>
        <name>ADP</name>
        <dbReference type="ChEBI" id="CHEBI:456216"/>
    </ligand>
</feature>
<dbReference type="EC" id="2.7.11.32" evidence="1"/>
<dbReference type="EC" id="2.7.4.27" evidence="1"/>
<dbReference type="EMBL" id="AE015929">
    <property type="protein sequence ID" value="AAO05801.1"/>
    <property type="molecule type" value="Genomic_DNA"/>
</dbReference>
<dbReference type="RefSeq" id="NP_765714.1">
    <property type="nucleotide sequence ID" value="NC_004461.1"/>
</dbReference>
<dbReference type="RefSeq" id="WP_001830630.1">
    <property type="nucleotide sequence ID" value="NZ_WBME01000005.1"/>
</dbReference>
<dbReference type="SMR" id="Q8CR12"/>
<dbReference type="KEGG" id="sep:SE_2159"/>
<dbReference type="PATRIC" id="fig|176280.10.peg.2109"/>
<dbReference type="eggNOG" id="COG1806">
    <property type="taxonomic scope" value="Bacteria"/>
</dbReference>
<dbReference type="HOGENOM" id="CLU_046206_2_1_9"/>
<dbReference type="OrthoDB" id="9782201at2"/>
<dbReference type="Proteomes" id="UP000001411">
    <property type="component" value="Chromosome"/>
</dbReference>
<dbReference type="GO" id="GO:0043531">
    <property type="term" value="F:ADP binding"/>
    <property type="evidence" value="ECO:0007669"/>
    <property type="project" value="UniProtKB-UniRule"/>
</dbReference>
<dbReference type="GO" id="GO:0005524">
    <property type="term" value="F:ATP binding"/>
    <property type="evidence" value="ECO:0007669"/>
    <property type="project" value="InterPro"/>
</dbReference>
<dbReference type="GO" id="GO:0016776">
    <property type="term" value="F:phosphotransferase activity, phosphate group as acceptor"/>
    <property type="evidence" value="ECO:0007669"/>
    <property type="project" value="UniProtKB-UniRule"/>
</dbReference>
<dbReference type="GO" id="GO:0004674">
    <property type="term" value="F:protein serine/threonine kinase activity"/>
    <property type="evidence" value="ECO:0007669"/>
    <property type="project" value="UniProtKB-UniRule"/>
</dbReference>
<dbReference type="HAMAP" id="MF_00921">
    <property type="entry name" value="PDRP"/>
    <property type="match status" value="1"/>
</dbReference>
<dbReference type="InterPro" id="IPR005177">
    <property type="entry name" value="Kinase-pyrophosphorylase"/>
</dbReference>
<dbReference type="InterPro" id="IPR026565">
    <property type="entry name" value="PPDK_reg"/>
</dbReference>
<dbReference type="NCBIfam" id="NF003742">
    <property type="entry name" value="PRK05339.1"/>
    <property type="match status" value="1"/>
</dbReference>
<dbReference type="PANTHER" id="PTHR31756">
    <property type="entry name" value="PYRUVATE, PHOSPHATE DIKINASE REGULATORY PROTEIN 1, CHLOROPLASTIC"/>
    <property type="match status" value="1"/>
</dbReference>
<dbReference type="PANTHER" id="PTHR31756:SF3">
    <property type="entry name" value="PYRUVATE, PHOSPHATE DIKINASE REGULATORY PROTEIN 1, CHLOROPLASTIC"/>
    <property type="match status" value="1"/>
</dbReference>
<dbReference type="Pfam" id="PF03618">
    <property type="entry name" value="Kinase-PPPase"/>
    <property type="match status" value="1"/>
</dbReference>
<sequence length="272" mass="31037">MKDNNEVLKLFIVSDSIGETAQRMIHATLTQFPDLTQVEIKKFPYIKDEQEFLNVLQLAKEQNAIVATTLVSESFNALGHQFANEHQIPYVDYMSELISIIKQHTHAKPLMESGALRKLNDEYFKRIEAIEYSVKYDDGKHFTDIGEADALIVGVSRTSKTPLSMYLANKGYKIANIPLVPEVAIPDNVFQQKNLKVFGLTASPNYIANIRRNRAETLGLSSESNYNSLERIKKELSYAEEVFRKLNATVINTEYKSIEESAFYIEKFLAKR</sequence>
<accession>Q8CR12</accession>
<reference key="1">
    <citation type="journal article" date="2003" name="Mol. Microbiol.">
        <title>Genome-based analysis of virulence genes in a non-biofilm-forming Staphylococcus epidermidis strain (ATCC 12228).</title>
        <authorList>
            <person name="Zhang Y.-Q."/>
            <person name="Ren S.-X."/>
            <person name="Li H.-L."/>
            <person name="Wang Y.-X."/>
            <person name="Fu G."/>
            <person name="Yang J."/>
            <person name="Qin Z.-Q."/>
            <person name="Miao Y.-G."/>
            <person name="Wang W.-Y."/>
            <person name="Chen R.-S."/>
            <person name="Shen Y."/>
            <person name="Chen Z."/>
            <person name="Yuan Z.-H."/>
            <person name="Zhao G.-P."/>
            <person name="Qu D."/>
            <person name="Danchin A."/>
            <person name="Wen Y.-M."/>
        </authorList>
    </citation>
    <scope>NUCLEOTIDE SEQUENCE [LARGE SCALE GENOMIC DNA]</scope>
    <source>
        <strain>ATCC 12228 / FDA PCI 1200</strain>
    </source>
</reference>
<comment type="function">
    <text evidence="1">Bifunctional serine/threonine kinase and phosphorylase involved in the regulation of the pyruvate, phosphate dikinase (PPDK) by catalyzing its phosphorylation/dephosphorylation.</text>
</comment>
<comment type="catalytic activity">
    <reaction evidence="1">
        <text>N(tele)-phospho-L-histidyl/L-threonyl-[pyruvate, phosphate dikinase] + ADP = N(tele)-phospho-L-histidyl/O-phospho-L-threonyl-[pyruvate, phosphate dikinase] + AMP + H(+)</text>
        <dbReference type="Rhea" id="RHEA:43692"/>
        <dbReference type="Rhea" id="RHEA-COMP:10650"/>
        <dbReference type="Rhea" id="RHEA-COMP:10651"/>
        <dbReference type="ChEBI" id="CHEBI:15378"/>
        <dbReference type="ChEBI" id="CHEBI:30013"/>
        <dbReference type="ChEBI" id="CHEBI:61977"/>
        <dbReference type="ChEBI" id="CHEBI:83586"/>
        <dbReference type="ChEBI" id="CHEBI:456215"/>
        <dbReference type="ChEBI" id="CHEBI:456216"/>
        <dbReference type="EC" id="2.7.11.32"/>
    </reaction>
</comment>
<comment type="catalytic activity">
    <reaction evidence="1">
        <text>N(tele)-phospho-L-histidyl/O-phospho-L-threonyl-[pyruvate, phosphate dikinase] + phosphate + H(+) = N(tele)-phospho-L-histidyl/L-threonyl-[pyruvate, phosphate dikinase] + diphosphate</text>
        <dbReference type="Rhea" id="RHEA:43696"/>
        <dbReference type="Rhea" id="RHEA-COMP:10650"/>
        <dbReference type="Rhea" id="RHEA-COMP:10651"/>
        <dbReference type="ChEBI" id="CHEBI:15378"/>
        <dbReference type="ChEBI" id="CHEBI:30013"/>
        <dbReference type="ChEBI" id="CHEBI:33019"/>
        <dbReference type="ChEBI" id="CHEBI:43474"/>
        <dbReference type="ChEBI" id="CHEBI:61977"/>
        <dbReference type="ChEBI" id="CHEBI:83586"/>
        <dbReference type="EC" id="2.7.4.27"/>
    </reaction>
</comment>
<comment type="similarity">
    <text evidence="1">Belongs to the pyruvate, phosphate/water dikinase regulatory protein family. PDRP subfamily.</text>
</comment>
<name>PDRP2_STAES</name>
<evidence type="ECO:0000255" key="1">
    <source>
        <dbReference type="HAMAP-Rule" id="MF_00921"/>
    </source>
</evidence>
<keyword id="KW-0418">Kinase</keyword>
<keyword id="KW-0547">Nucleotide-binding</keyword>
<keyword id="KW-0723">Serine/threonine-protein kinase</keyword>
<keyword id="KW-0808">Transferase</keyword>
<protein>
    <recommendedName>
        <fullName evidence="1">Putative pyruvate, phosphate dikinase regulatory protein 2</fullName>
        <shortName evidence="1">PPDK regulatory protein 2</shortName>
        <ecNumber evidence="1">2.7.11.32</ecNumber>
        <ecNumber evidence="1">2.7.4.27</ecNumber>
    </recommendedName>
</protein>
<gene>
    <name type="ordered locus">SE_2159</name>
</gene>
<organism>
    <name type="scientific">Staphylococcus epidermidis (strain ATCC 12228 / FDA PCI 1200)</name>
    <dbReference type="NCBI Taxonomy" id="176280"/>
    <lineage>
        <taxon>Bacteria</taxon>
        <taxon>Bacillati</taxon>
        <taxon>Bacillota</taxon>
        <taxon>Bacilli</taxon>
        <taxon>Bacillales</taxon>
        <taxon>Staphylococcaceae</taxon>
        <taxon>Staphylococcus</taxon>
    </lineage>
</organism>
<proteinExistence type="inferred from homology"/>